<sequence length="646" mass="74920">MLFVLELFSHYVLHFERYFILSRQSTLLIQWSIVVLAGLYLLVHHPKINRQRTMFLAGVILRIVLLAGVSVELIHQVQSTNFTSAYLREDGKELLPLLHFLLYGYVLLTAFHYMLMPRDHGGKGKFYTFDLAVVSLPIVQMIFSFFSYWKEYPDGMEPIAFVFLFFIITLPIALNVVFFKLYWRTDKILLGLFYTLIIGLLVLLLAPYPNQISKDYGAVMPYTIYLAMAGFLMSYHLFQKSGKVYVRVNKWVTMAVMVFFVLLLNPIYNIGTAAFAVSKPANVHDSFNFVGEHISSEKAEQILKSFFPTDETLYLHDTNMDVHYFYSFESKGYKAEVDEVSQLIRNYEYLQKAHGKKLTNQEYKRKSIAFLERHGRVLHKDHIETKVSQEDGQTVVRIYLKNQLHKKDHADDGAVFYWEKETLMGFSEDPSIYQLDSLLHVHITEQDIHDKVEQMFTALNISKQPYQITDIESDSLLGSMVRVETKVGIVLEFEGESGCLHSLSLPMKKNISMANSRLQHQILSIFDARGSEKKKKSSQGDMVMYTDSSKTYEFVEAQGQLNVYVYSDTPDQSFPYTYRNGTLAYEKVASLYQDVIYKKRMRPIIVQRGDERHYAWLIIIQPFGSNRHDAYVVDGETQEVKSLYES</sequence>
<evidence type="ECO:0000255" key="1"/>
<evidence type="ECO:0000305" key="2"/>
<proteinExistence type="predicted"/>
<gene>
    <name type="primary">ylaA</name>
    <name type="ordered locus">BSU14710</name>
</gene>
<name>YLAA_BACSU</name>
<reference key="1">
    <citation type="submission" date="1997-06" db="EMBL/GenBank/DDBJ databases">
        <authorList>
            <person name="Purnell B."/>
            <person name="Presecan E."/>
            <person name="Glaser P."/>
            <person name="Richou A."/>
            <person name="Danchin A."/>
            <person name="Goffeau A."/>
        </authorList>
    </citation>
    <scope>NUCLEOTIDE SEQUENCE [GENOMIC DNA]</scope>
    <source>
        <strain>168</strain>
    </source>
</reference>
<reference key="2">
    <citation type="journal article" date="1997" name="Nature">
        <title>The complete genome sequence of the Gram-positive bacterium Bacillus subtilis.</title>
        <authorList>
            <person name="Kunst F."/>
            <person name="Ogasawara N."/>
            <person name="Moszer I."/>
            <person name="Albertini A.M."/>
            <person name="Alloni G."/>
            <person name="Azevedo V."/>
            <person name="Bertero M.G."/>
            <person name="Bessieres P."/>
            <person name="Bolotin A."/>
            <person name="Borchert S."/>
            <person name="Borriss R."/>
            <person name="Boursier L."/>
            <person name="Brans A."/>
            <person name="Braun M."/>
            <person name="Brignell S.C."/>
            <person name="Bron S."/>
            <person name="Brouillet S."/>
            <person name="Bruschi C.V."/>
            <person name="Caldwell B."/>
            <person name="Capuano V."/>
            <person name="Carter N.M."/>
            <person name="Choi S.-K."/>
            <person name="Codani J.-J."/>
            <person name="Connerton I.F."/>
            <person name="Cummings N.J."/>
            <person name="Daniel R.A."/>
            <person name="Denizot F."/>
            <person name="Devine K.M."/>
            <person name="Duesterhoeft A."/>
            <person name="Ehrlich S.D."/>
            <person name="Emmerson P.T."/>
            <person name="Entian K.-D."/>
            <person name="Errington J."/>
            <person name="Fabret C."/>
            <person name="Ferrari E."/>
            <person name="Foulger D."/>
            <person name="Fritz C."/>
            <person name="Fujita M."/>
            <person name="Fujita Y."/>
            <person name="Fuma S."/>
            <person name="Galizzi A."/>
            <person name="Galleron N."/>
            <person name="Ghim S.-Y."/>
            <person name="Glaser P."/>
            <person name="Goffeau A."/>
            <person name="Golightly E.J."/>
            <person name="Grandi G."/>
            <person name="Guiseppi G."/>
            <person name="Guy B.J."/>
            <person name="Haga K."/>
            <person name="Haiech J."/>
            <person name="Harwood C.R."/>
            <person name="Henaut A."/>
            <person name="Hilbert H."/>
            <person name="Holsappel S."/>
            <person name="Hosono S."/>
            <person name="Hullo M.-F."/>
            <person name="Itaya M."/>
            <person name="Jones L.-M."/>
            <person name="Joris B."/>
            <person name="Karamata D."/>
            <person name="Kasahara Y."/>
            <person name="Klaerr-Blanchard M."/>
            <person name="Klein C."/>
            <person name="Kobayashi Y."/>
            <person name="Koetter P."/>
            <person name="Koningstein G."/>
            <person name="Krogh S."/>
            <person name="Kumano M."/>
            <person name="Kurita K."/>
            <person name="Lapidus A."/>
            <person name="Lardinois S."/>
            <person name="Lauber J."/>
            <person name="Lazarevic V."/>
            <person name="Lee S.-M."/>
            <person name="Levine A."/>
            <person name="Liu H."/>
            <person name="Masuda S."/>
            <person name="Mauel C."/>
            <person name="Medigue C."/>
            <person name="Medina N."/>
            <person name="Mellado R.P."/>
            <person name="Mizuno M."/>
            <person name="Moestl D."/>
            <person name="Nakai S."/>
            <person name="Noback M."/>
            <person name="Noone D."/>
            <person name="O'Reilly M."/>
            <person name="Ogawa K."/>
            <person name="Ogiwara A."/>
            <person name="Oudega B."/>
            <person name="Park S.-H."/>
            <person name="Parro V."/>
            <person name="Pohl T.M."/>
            <person name="Portetelle D."/>
            <person name="Porwollik S."/>
            <person name="Prescott A.M."/>
            <person name="Presecan E."/>
            <person name="Pujic P."/>
            <person name="Purnelle B."/>
            <person name="Rapoport G."/>
            <person name="Rey M."/>
            <person name="Reynolds S."/>
            <person name="Rieger M."/>
            <person name="Rivolta C."/>
            <person name="Rocha E."/>
            <person name="Roche B."/>
            <person name="Rose M."/>
            <person name="Sadaie Y."/>
            <person name="Sato T."/>
            <person name="Scanlan E."/>
            <person name="Schleich S."/>
            <person name="Schroeter R."/>
            <person name="Scoffone F."/>
            <person name="Sekiguchi J."/>
            <person name="Sekowska A."/>
            <person name="Seror S.J."/>
            <person name="Serror P."/>
            <person name="Shin B.-S."/>
            <person name="Soldo B."/>
            <person name="Sorokin A."/>
            <person name="Tacconi E."/>
            <person name="Takagi T."/>
            <person name="Takahashi H."/>
            <person name="Takemaru K."/>
            <person name="Takeuchi M."/>
            <person name="Tamakoshi A."/>
            <person name="Tanaka T."/>
            <person name="Terpstra P."/>
            <person name="Tognoni A."/>
            <person name="Tosato V."/>
            <person name="Uchiyama S."/>
            <person name="Vandenbol M."/>
            <person name="Vannier F."/>
            <person name="Vassarotti A."/>
            <person name="Viari A."/>
            <person name="Wambutt R."/>
            <person name="Wedler E."/>
            <person name="Wedler H."/>
            <person name="Weitzenegger T."/>
            <person name="Winters P."/>
            <person name="Wipat A."/>
            <person name="Yamamoto H."/>
            <person name="Yamane K."/>
            <person name="Yasumoto K."/>
            <person name="Yata K."/>
            <person name="Yoshida K."/>
            <person name="Yoshikawa H.-F."/>
            <person name="Zumstein E."/>
            <person name="Yoshikawa H."/>
            <person name="Danchin A."/>
        </authorList>
    </citation>
    <scope>NUCLEOTIDE SEQUENCE [LARGE SCALE GENOMIC DNA]</scope>
    <source>
        <strain>168</strain>
    </source>
</reference>
<accession>O07625</accession>
<protein>
    <recommendedName>
        <fullName>Uncharacterized protein YlaA</fullName>
    </recommendedName>
</protein>
<comment type="subcellular location">
    <subcellularLocation>
        <location evidence="2">Cell membrane</location>
        <topology evidence="2">Multi-pass membrane protein</topology>
    </subcellularLocation>
</comment>
<organism>
    <name type="scientific">Bacillus subtilis (strain 168)</name>
    <dbReference type="NCBI Taxonomy" id="224308"/>
    <lineage>
        <taxon>Bacteria</taxon>
        <taxon>Bacillati</taxon>
        <taxon>Bacillota</taxon>
        <taxon>Bacilli</taxon>
        <taxon>Bacillales</taxon>
        <taxon>Bacillaceae</taxon>
        <taxon>Bacillus</taxon>
    </lineage>
</organism>
<keyword id="KW-1003">Cell membrane</keyword>
<keyword id="KW-0472">Membrane</keyword>
<keyword id="KW-1185">Reference proteome</keyword>
<keyword id="KW-0812">Transmembrane</keyword>
<keyword id="KW-1133">Transmembrane helix</keyword>
<feature type="chain" id="PRO_0000049619" description="Uncharacterized protein YlaA">
    <location>
        <begin position="1"/>
        <end position="646"/>
    </location>
</feature>
<feature type="transmembrane region" description="Helical" evidence="1">
    <location>
        <begin position="20"/>
        <end position="42"/>
    </location>
</feature>
<feature type="transmembrane region" description="Helical" evidence="1">
    <location>
        <begin position="55"/>
        <end position="77"/>
    </location>
</feature>
<feature type="transmembrane region" description="Helical" evidence="1">
    <location>
        <begin position="97"/>
        <end position="115"/>
    </location>
</feature>
<feature type="transmembrane region" description="Helical" evidence="1">
    <location>
        <begin position="127"/>
        <end position="149"/>
    </location>
</feature>
<feature type="transmembrane region" description="Helical" evidence="1">
    <location>
        <begin position="159"/>
        <end position="181"/>
    </location>
</feature>
<feature type="transmembrane region" description="Helical" evidence="1">
    <location>
        <begin position="188"/>
        <end position="206"/>
    </location>
</feature>
<feature type="transmembrane region" description="Helical" evidence="1">
    <location>
        <begin position="216"/>
        <end position="238"/>
    </location>
</feature>
<feature type="transmembrane region" description="Helical" evidence="1">
    <location>
        <begin position="251"/>
        <end position="273"/>
    </location>
</feature>
<dbReference type="EMBL" id="Z97025">
    <property type="protein sequence ID" value="CAB09706.1"/>
    <property type="molecule type" value="Genomic_DNA"/>
</dbReference>
<dbReference type="EMBL" id="AL009126">
    <property type="protein sequence ID" value="CAB13344.1"/>
    <property type="molecule type" value="Genomic_DNA"/>
</dbReference>
<dbReference type="PIR" id="G69871">
    <property type="entry name" value="G69871"/>
</dbReference>
<dbReference type="RefSeq" id="NP_389354.1">
    <property type="nucleotide sequence ID" value="NC_000964.3"/>
</dbReference>
<dbReference type="RefSeq" id="WP_010886503.1">
    <property type="nucleotide sequence ID" value="NZ_OZ025638.1"/>
</dbReference>
<dbReference type="FunCoup" id="O07625">
    <property type="interactions" value="238"/>
</dbReference>
<dbReference type="STRING" id="224308.BSU14710"/>
<dbReference type="PaxDb" id="224308-BSU14710"/>
<dbReference type="EnsemblBacteria" id="CAB13344">
    <property type="protein sequence ID" value="CAB13344"/>
    <property type="gene ID" value="BSU_14710"/>
</dbReference>
<dbReference type="GeneID" id="935984"/>
<dbReference type="KEGG" id="bsu:BSU14710"/>
<dbReference type="PATRIC" id="fig|224308.43.peg.1561"/>
<dbReference type="eggNOG" id="ENOG50348WX">
    <property type="taxonomic scope" value="Bacteria"/>
</dbReference>
<dbReference type="InParanoid" id="O07625"/>
<dbReference type="OrthoDB" id="1955097at2"/>
<dbReference type="BioCyc" id="BSUB:BSU14710-MONOMER"/>
<dbReference type="Proteomes" id="UP000001570">
    <property type="component" value="Chromosome"/>
</dbReference>
<dbReference type="GO" id="GO:0005886">
    <property type="term" value="C:plasma membrane"/>
    <property type="evidence" value="ECO:0007669"/>
    <property type="project" value="UniProtKB-SubCell"/>
</dbReference>